<evidence type="ECO:0000255" key="1">
    <source>
        <dbReference type="HAMAP-Rule" id="MF_00144"/>
    </source>
</evidence>
<keyword id="KW-0067">ATP-binding</keyword>
<keyword id="KW-0963">Cytoplasm</keyword>
<keyword id="KW-1015">Disulfide bond</keyword>
<keyword id="KW-0547">Nucleotide-binding</keyword>
<keyword id="KW-0694">RNA-binding</keyword>
<keyword id="KW-0808">Transferase</keyword>
<keyword id="KW-0819">tRNA processing</keyword>
<keyword id="KW-0820">tRNA-binding</keyword>
<gene>
    <name evidence="1" type="primary">mnmA</name>
    <name type="ordered locus">ECDH10B_1205</name>
</gene>
<proteinExistence type="inferred from homology"/>
<organism>
    <name type="scientific">Escherichia coli (strain K12 / DH10B)</name>
    <dbReference type="NCBI Taxonomy" id="316385"/>
    <lineage>
        <taxon>Bacteria</taxon>
        <taxon>Pseudomonadati</taxon>
        <taxon>Pseudomonadota</taxon>
        <taxon>Gammaproteobacteria</taxon>
        <taxon>Enterobacterales</taxon>
        <taxon>Enterobacteriaceae</taxon>
        <taxon>Escherichia</taxon>
    </lineage>
</organism>
<feature type="chain" id="PRO_0000349627" description="tRNA-specific 2-thiouridylase MnmA">
    <location>
        <begin position="1"/>
        <end position="368"/>
    </location>
</feature>
<feature type="region of interest" description="Interaction with target base in tRNA" evidence="1">
    <location>
        <begin position="97"/>
        <end position="99"/>
    </location>
</feature>
<feature type="region of interest" description="Interaction with tRNA" evidence="1">
    <location>
        <begin position="149"/>
        <end position="151"/>
    </location>
</feature>
<feature type="region of interest" description="Interaction with tRNA" evidence="1">
    <location>
        <begin position="311"/>
        <end position="312"/>
    </location>
</feature>
<feature type="active site" description="Nucleophile" evidence="1">
    <location>
        <position position="102"/>
    </location>
</feature>
<feature type="active site" description="Cysteine persulfide intermediate" evidence="1">
    <location>
        <position position="199"/>
    </location>
</feature>
<feature type="binding site" evidence="1">
    <location>
        <begin position="11"/>
        <end position="18"/>
    </location>
    <ligand>
        <name>ATP</name>
        <dbReference type="ChEBI" id="CHEBI:30616"/>
    </ligand>
</feature>
<feature type="binding site" evidence="1">
    <location>
        <position position="37"/>
    </location>
    <ligand>
        <name>ATP</name>
        <dbReference type="ChEBI" id="CHEBI:30616"/>
    </ligand>
</feature>
<feature type="binding site" evidence="1">
    <location>
        <position position="127"/>
    </location>
    <ligand>
        <name>ATP</name>
        <dbReference type="ChEBI" id="CHEBI:30616"/>
    </ligand>
</feature>
<feature type="site" description="Interaction with tRNA" evidence="1">
    <location>
        <position position="128"/>
    </location>
</feature>
<feature type="site" description="Interaction with tRNA" evidence="1">
    <location>
        <position position="344"/>
    </location>
</feature>
<feature type="disulfide bond" description="Alternate" evidence="1">
    <location>
        <begin position="102"/>
        <end position="199"/>
    </location>
</feature>
<comment type="function">
    <text evidence="1">Catalyzes the 2-thiolation of uridine at the wobble position (U34) of tRNA(Lys), tRNA(Glu) and tRNA(Gln), leading to the formation of s(2)U34, the first step of tRNA-mnm(5)s(2)U34 synthesis. Sulfur is provided by IscS, via a sulfur-relay system. Binds ATP and its substrate tRNAs.</text>
</comment>
<comment type="catalytic activity">
    <reaction evidence="1">
        <text>S-sulfanyl-L-cysteinyl-[protein] + uridine(34) in tRNA + AH2 + ATP = 2-thiouridine(34) in tRNA + L-cysteinyl-[protein] + A + AMP + diphosphate + H(+)</text>
        <dbReference type="Rhea" id="RHEA:47032"/>
        <dbReference type="Rhea" id="RHEA-COMP:10131"/>
        <dbReference type="Rhea" id="RHEA-COMP:11726"/>
        <dbReference type="Rhea" id="RHEA-COMP:11727"/>
        <dbReference type="Rhea" id="RHEA-COMP:11728"/>
        <dbReference type="ChEBI" id="CHEBI:13193"/>
        <dbReference type="ChEBI" id="CHEBI:15378"/>
        <dbReference type="ChEBI" id="CHEBI:17499"/>
        <dbReference type="ChEBI" id="CHEBI:29950"/>
        <dbReference type="ChEBI" id="CHEBI:30616"/>
        <dbReference type="ChEBI" id="CHEBI:33019"/>
        <dbReference type="ChEBI" id="CHEBI:61963"/>
        <dbReference type="ChEBI" id="CHEBI:65315"/>
        <dbReference type="ChEBI" id="CHEBI:87170"/>
        <dbReference type="ChEBI" id="CHEBI:456215"/>
        <dbReference type="EC" id="2.8.1.13"/>
    </reaction>
</comment>
<comment type="subunit">
    <text evidence="1">Interacts with TusE.</text>
</comment>
<comment type="subcellular location">
    <subcellularLocation>
        <location evidence="1">Cytoplasm</location>
    </subcellularLocation>
</comment>
<comment type="similarity">
    <text evidence="1">Belongs to the MnmA/TRMU family.</text>
</comment>
<protein>
    <recommendedName>
        <fullName evidence="1">tRNA-specific 2-thiouridylase MnmA</fullName>
        <ecNumber evidence="1">2.8.1.13</ecNumber>
    </recommendedName>
</protein>
<name>MNMA_ECODH</name>
<accession>B1XA43</accession>
<dbReference type="EC" id="2.8.1.13" evidence="1"/>
<dbReference type="EMBL" id="CP000948">
    <property type="protein sequence ID" value="ACB02326.1"/>
    <property type="molecule type" value="Genomic_DNA"/>
</dbReference>
<dbReference type="RefSeq" id="WP_001297484.1">
    <property type="nucleotide sequence ID" value="NC_010473.1"/>
</dbReference>
<dbReference type="SMR" id="B1XA43"/>
<dbReference type="GeneID" id="75203719"/>
<dbReference type="KEGG" id="ecd:ECDH10B_1205"/>
<dbReference type="HOGENOM" id="CLU_035188_1_0_6"/>
<dbReference type="GO" id="GO:0005737">
    <property type="term" value="C:cytoplasm"/>
    <property type="evidence" value="ECO:0007669"/>
    <property type="project" value="UniProtKB-SubCell"/>
</dbReference>
<dbReference type="GO" id="GO:0005524">
    <property type="term" value="F:ATP binding"/>
    <property type="evidence" value="ECO:0007669"/>
    <property type="project" value="UniProtKB-KW"/>
</dbReference>
<dbReference type="GO" id="GO:0000049">
    <property type="term" value="F:tRNA binding"/>
    <property type="evidence" value="ECO:0007669"/>
    <property type="project" value="UniProtKB-KW"/>
</dbReference>
<dbReference type="GO" id="GO:0103016">
    <property type="term" value="F:tRNA-uridine 2-sulfurtransferase activity"/>
    <property type="evidence" value="ECO:0007669"/>
    <property type="project" value="UniProtKB-EC"/>
</dbReference>
<dbReference type="GO" id="GO:0002143">
    <property type="term" value="P:tRNA wobble position uridine thiolation"/>
    <property type="evidence" value="ECO:0007669"/>
    <property type="project" value="TreeGrafter"/>
</dbReference>
<dbReference type="CDD" id="cd01998">
    <property type="entry name" value="MnmA_TRMU-like"/>
    <property type="match status" value="1"/>
</dbReference>
<dbReference type="FunFam" id="2.30.30.280:FF:000001">
    <property type="entry name" value="tRNA-specific 2-thiouridylase MnmA"/>
    <property type="match status" value="1"/>
</dbReference>
<dbReference type="FunFam" id="2.40.30.10:FF:000023">
    <property type="entry name" value="tRNA-specific 2-thiouridylase MnmA"/>
    <property type="match status" value="1"/>
</dbReference>
<dbReference type="FunFam" id="3.40.50.620:FF:000004">
    <property type="entry name" value="tRNA-specific 2-thiouridylase MnmA"/>
    <property type="match status" value="1"/>
</dbReference>
<dbReference type="Gene3D" id="2.30.30.280">
    <property type="entry name" value="Adenine nucleotide alpha hydrolases-like domains"/>
    <property type="match status" value="1"/>
</dbReference>
<dbReference type="Gene3D" id="3.40.50.620">
    <property type="entry name" value="HUPs"/>
    <property type="match status" value="1"/>
</dbReference>
<dbReference type="Gene3D" id="2.40.30.10">
    <property type="entry name" value="Translation factors"/>
    <property type="match status" value="1"/>
</dbReference>
<dbReference type="HAMAP" id="MF_00144">
    <property type="entry name" value="tRNA_thiouridyl_MnmA"/>
    <property type="match status" value="1"/>
</dbReference>
<dbReference type="InterPro" id="IPR004506">
    <property type="entry name" value="MnmA-like"/>
</dbReference>
<dbReference type="InterPro" id="IPR046885">
    <property type="entry name" value="MnmA-like_C"/>
</dbReference>
<dbReference type="InterPro" id="IPR046884">
    <property type="entry name" value="MnmA-like_central"/>
</dbReference>
<dbReference type="InterPro" id="IPR023382">
    <property type="entry name" value="MnmA-like_central_sf"/>
</dbReference>
<dbReference type="InterPro" id="IPR014729">
    <property type="entry name" value="Rossmann-like_a/b/a_fold"/>
</dbReference>
<dbReference type="NCBIfam" id="NF001138">
    <property type="entry name" value="PRK00143.1"/>
    <property type="match status" value="1"/>
</dbReference>
<dbReference type="NCBIfam" id="TIGR00420">
    <property type="entry name" value="trmU"/>
    <property type="match status" value="1"/>
</dbReference>
<dbReference type="PANTHER" id="PTHR11933:SF5">
    <property type="entry name" value="MITOCHONDRIAL TRNA-SPECIFIC 2-THIOURIDYLASE 1"/>
    <property type="match status" value="1"/>
</dbReference>
<dbReference type="PANTHER" id="PTHR11933">
    <property type="entry name" value="TRNA 5-METHYLAMINOMETHYL-2-THIOURIDYLATE -METHYLTRANSFERASE"/>
    <property type="match status" value="1"/>
</dbReference>
<dbReference type="Pfam" id="PF03054">
    <property type="entry name" value="tRNA_Me_trans"/>
    <property type="match status" value="1"/>
</dbReference>
<dbReference type="Pfam" id="PF20258">
    <property type="entry name" value="tRNA_Me_trans_C"/>
    <property type="match status" value="1"/>
</dbReference>
<dbReference type="Pfam" id="PF20259">
    <property type="entry name" value="tRNA_Me_trans_M"/>
    <property type="match status" value="1"/>
</dbReference>
<dbReference type="SUPFAM" id="SSF52402">
    <property type="entry name" value="Adenine nucleotide alpha hydrolases-like"/>
    <property type="match status" value="1"/>
</dbReference>
<reference key="1">
    <citation type="journal article" date="2008" name="J. Bacteriol.">
        <title>The complete genome sequence of Escherichia coli DH10B: insights into the biology of a laboratory workhorse.</title>
        <authorList>
            <person name="Durfee T."/>
            <person name="Nelson R."/>
            <person name="Baldwin S."/>
            <person name="Plunkett G. III"/>
            <person name="Burland V."/>
            <person name="Mau B."/>
            <person name="Petrosino J.F."/>
            <person name="Qin X."/>
            <person name="Muzny D.M."/>
            <person name="Ayele M."/>
            <person name="Gibbs R.A."/>
            <person name="Csorgo B."/>
            <person name="Posfai G."/>
            <person name="Weinstock G.M."/>
            <person name="Blattner F.R."/>
        </authorList>
    </citation>
    <scope>NUCLEOTIDE SEQUENCE [LARGE SCALE GENOMIC DNA]</scope>
    <source>
        <strain>K12 / DH10B</strain>
    </source>
</reference>
<sequence>MSETAKKVIVGMSGGVDSSVSAWLLQQQGYQVEGLFMKNWEEDDGEEYCTAAADLADAQAVCDKLGIELHTVNFAAEYWDNVFELFLAEYKAGRTPNPDILCNKEIKFKAFLEFAAEDLGADYIATGHYVRRADVDGKSRLLRGLDSNKDQSYFLYTLSHEQIAQSLFPVGELEKPQVRKIAEDLGLVTAKKKDSTGICFIGERKFREFLGRYLPAQPGKIITVDGDEIGEHQGLMYHTLGQRKGLGIGGTKEGTEEPWYVVDKDVENNILVVAQGHEHPRLMSVGLIAQQLHWVDREPFTGTMRCTVKTRYRQTDIPCTVKALDDDRIEVIFDEPVAAVTPGQSAVFYNGEVCLGGGIIEQRLPLPV</sequence>